<proteinExistence type="inferred from homology"/>
<geneLocation type="plasmid">
    <name>megaplasmid CH34</name>
</geneLocation>
<organism>
    <name type="scientific">Cupriavidus metallidurans (strain ATCC 43123 / DSM 2839 / NBRC 102507 / CH34)</name>
    <name type="common">Ralstonia metallidurans</name>
    <dbReference type="NCBI Taxonomy" id="266264"/>
    <lineage>
        <taxon>Bacteria</taxon>
        <taxon>Pseudomonadati</taxon>
        <taxon>Pseudomonadota</taxon>
        <taxon>Betaproteobacteria</taxon>
        <taxon>Burkholderiales</taxon>
        <taxon>Burkholderiaceae</taxon>
        <taxon>Cupriavidus</taxon>
    </lineage>
</organism>
<sequence>MSKVLVLYYSTYGHVEALAEAVAEGARATGATVDVKRVPETVPAAVAEASHFKVDQKAPVATVEDLANYDAIVVGTPTRFGRISSQMAAFLDQAGGLWMRGVLNGKVGGAFTSTATQHGGQEATLFSIIANLLHFGMTIVGLPYSHQGQMTLDEIVGGSPYGATTIAGGQGQRQPSAIELEGARHQGELIAKTANKLFG</sequence>
<gene>
    <name type="ordered locus">Rmet_4096</name>
</gene>
<dbReference type="EC" id="1.6.5.2" evidence="1"/>
<dbReference type="EMBL" id="CP000353">
    <property type="protein sequence ID" value="ABF10963.1"/>
    <property type="molecule type" value="Genomic_DNA"/>
</dbReference>
<dbReference type="SMR" id="Q1LFW3"/>
<dbReference type="KEGG" id="rme:Rmet_4096"/>
<dbReference type="eggNOG" id="COG0655">
    <property type="taxonomic scope" value="Bacteria"/>
</dbReference>
<dbReference type="HOGENOM" id="CLU_051402_0_2_4"/>
<dbReference type="Proteomes" id="UP000002429">
    <property type="component" value="Plasmid megaplasmid CH34"/>
</dbReference>
<dbReference type="GO" id="GO:0016020">
    <property type="term" value="C:membrane"/>
    <property type="evidence" value="ECO:0007669"/>
    <property type="project" value="TreeGrafter"/>
</dbReference>
<dbReference type="GO" id="GO:0050660">
    <property type="term" value="F:flavin adenine dinucleotide binding"/>
    <property type="evidence" value="ECO:0007669"/>
    <property type="project" value="UniProtKB-UniRule"/>
</dbReference>
<dbReference type="GO" id="GO:0010181">
    <property type="term" value="F:FMN binding"/>
    <property type="evidence" value="ECO:0007669"/>
    <property type="project" value="InterPro"/>
</dbReference>
<dbReference type="GO" id="GO:0051287">
    <property type="term" value="F:NAD binding"/>
    <property type="evidence" value="ECO:0007669"/>
    <property type="project" value="UniProtKB-UniRule"/>
</dbReference>
<dbReference type="GO" id="GO:0050136">
    <property type="term" value="F:NADH:ubiquinone reductase (non-electrogenic) activity"/>
    <property type="evidence" value="ECO:0007669"/>
    <property type="project" value="RHEA"/>
</dbReference>
<dbReference type="GO" id="GO:0050661">
    <property type="term" value="F:NADP binding"/>
    <property type="evidence" value="ECO:0007669"/>
    <property type="project" value="UniProtKB-UniRule"/>
</dbReference>
<dbReference type="GO" id="GO:0008753">
    <property type="term" value="F:NADPH dehydrogenase (quinone) activity"/>
    <property type="evidence" value="ECO:0007669"/>
    <property type="project" value="RHEA"/>
</dbReference>
<dbReference type="FunFam" id="3.40.50.360:FF:000001">
    <property type="entry name" value="NAD(P)H dehydrogenase (Quinone) FQR1-like"/>
    <property type="match status" value="1"/>
</dbReference>
<dbReference type="Gene3D" id="3.40.50.360">
    <property type="match status" value="1"/>
</dbReference>
<dbReference type="HAMAP" id="MF_01017">
    <property type="entry name" value="NQOR"/>
    <property type="match status" value="1"/>
</dbReference>
<dbReference type="InterPro" id="IPR008254">
    <property type="entry name" value="Flavodoxin/NO_synth"/>
</dbReference>
<dbReference type="InterPro" id="IPR029039">
    <property type="entry name" value="Flavoprotein-like_sf"/>
</dbReference>
<dbReference type="InterPro" id="IPR010089">
    <property type="entry name" value="Flavoprotein_WrbA-like"/>
</dbReference>
<dbReference type="InterPro" id="IPR005025">
    <property type="entry name" value="FMN_Rdtase-like_dom"/>
</dbReference>
<dbReference type="InterPro" id="IPR037513">
    <property type="entry name" value="NQO"/>
</dbReference>
<dbReference type="NCBIfam" id="TIGR01755">
    <property type="entry name" value="flav_wrbA"/>
    <property type="match status" value="1"/>
</dbReference>
<dbReference type="NCBIfam" id="NF002999">
    <property type="entry name" value="PRK03767.1"/>
    <property type="match status" value="1"/>
</dbReference>
<dbReference type="PANTHER" id="PTHR30546">
    <property type="entry name" value="FLAVODOXIN-RELATED PROTEIN WRBA-RELATED"/>
    <property type="match status" value="1"/>
</dbReference>
<dbReference type="PANTHER" id="PTHR30546:SF23">
    <property type="entry name" value="FLAVOPROTEIN-LIKE PROTEIN YCP4-RELATED"/>
    <property type="match status" value="1"/>
</dbReference>
<dbReference type="Pfam" id="PF03358">
    <property type="entry name" value="FMN_red"/>
    <property type="match status" value="1"/>
</dbReference>
<dbReference type="SUPFAM" id="SSF52218">
    <property type="entry name" value="Flavoproteins"/>
    <property type="match status" value="1"/>
</dbReference>
<dbReference type="PROSITE" id="PS50902">
    <property type="entry name" value="FLAVODOXIN_LIKE"/>
    <property type="match status" value="1"/>
</dbReference>
<protein>
    <recommendedName>
        <fullName evidence="1">NAD(P)H dehydrogenase (quinone)</fullName>
        <ecNumber evidence="1">1.6.5.2</ecNumber>
    </recommendedName>
    <alternativeName>
        <fullName>Flavoprotein WrbA</fullName>
    </alternativeName>
    <alternativeName>
        <fullName evidence="1">NAD(P)H:quinone oxidoreductase</fullName>
        <shortName evidence="1">NQO</shortName>
    </alternativeName>
</protein>
<keyword id="KW-0285">Flavoprotein</keyword>
<keyword id="KW-0288">FMN</keyword>
<keyword id="KW-0520">NAD</keyword>
<keyword id="KW-0521">NADP</keyword>
<keyword id="KW-0547">Nucleotide-binding</keyword>
<keyword id="KW-0560">Oxidoreductase</keyword>
<keyword id="KW-0614">Plasmid</keyword>
<keyword id="KW-1185">Reference proteome</keyword>
<reference key="1">
    <citation type="journal article" date="2010" name="PLoS ONE">
        <title>The complete genome sequence of Cupriavidus metallidurans strain CH34, a master survivalist in harsh and anthropogenic environments.</title>
        <authorList>
            <person name="Janssen P.J."/>
            <person name="Van Houdt R."/>
            <person name="Moors H."/>
            <person name="Monsieurs P."/>
            <person name="Morin N."/>
            <person name="Michaux A."/>
            <person name="Benotmane M.A."/>
            <person name="Leys N."/>
            <person name="Vallaeys T."/>
            <person name="Lapidus A."/>
            <person name="Monchy S."/>
            <person name="Medigue C."/>
            <person name="Taghavi S."/>
            <person name="McCorkle S."/>
            <person name="Dunn J."/>
            <person name="van der Lelie D."/>
            <person name="Mergeay M."/>
        </authorList>
    </citation>
    <scope>NUCLEOTIDE SEQUENCE [LARGE SCALE GENOMIC DNA]</scope>
    <source>
        <strain>ATCC 43123 / DSM 2839 / NBRC 102507 / CH34</strain>
    </source>
</reference>
<name>NQOR_CUPMC</name>
<accession>Q1LFW3</accession>
<feature type="chain" id="PRO_0000291023" description="NAD(P)H dehydrogenase (quinone)">
    <location>
        <begin position="1"/>
        <end position="199"/>
    </location>
</feature>
<feature type="domain" description="Flavodoxin-like" evidence="1">
    <location>
        <begin position="4"/>
        <end position="190"/>
    </location>
</feature>
<feature type="binding site" evidence="1">
    <location>
        <begin position="10"/>
        <end position="15"/>
    </location>
    <ligand>
        <name>FMN</name>
        <dbReference type="ChEBI" id="CHEBI:58210"/>
    </ligand>
</feature>
<feature type="binding site" evidence="1">
    <location>
        <position position="12"/>
    </location>
    <ligand>
        <name>NAD(+)</name>
        <dbReference type="ChEBI" id="CHEBI:57540"/>
    </ligand>
</feature>
<feature type="binding site" evidence="1">
    <location>
        <begin position="78"/>
        <end position="80"/>
    </location>
    <ligand>
        <name>FMN</name>
        <dbReference type="ChEBI" id="CHEBI:58210"/>
    </ligand>
</feature>
<feature type="binding site" evidence="1">
    <location>
        <position position="98"/>
    </location>
    <ligand>
        <name>substrate</name>
    </ligand>
</feature>
<feature type="binding site" evidence="1">
    <location>
        <begin position="113"/>
        <end position="119"/>
    </location>
    <ligand>
        <name>FMN</name>
        <dbReference type="ChEBI" id="CHEBI:58210"/>
    </ligand>
</feature>
<feature type="binding site" evidence="1">
    <location>
        <position position="134"/>
    </location>
    <ligand>
        <name>FMN</name>
        <dbReference type="ChEBI" id="CHEBI:58210"/>
    </ligand>
</feature>
<evidence type="ECO:0000255" key="1">
    <source>
        <dbReference type="HAMAP-Rule" id="MF_01017"/>
    </source>
</evidence>
<comment type="catalytic activity">
    <reaction evidence="1">
        <text>a quinone + NADH + H(+) = a quinol + NAD(+)</text>
        <dbReference type="Rhea" id="RHEA:46160"/>
        <dbReference type="ChEBI" id="CHEBI:15378"/>
        <dbReference type="ChEBI" id="CHEBI:24646"/>
        <dbReference type="ChEBI" id="CHEBI:57540"/>
        <dbReference type="ChEBI" id="CHEBI:57945"/>
        <dbReference type="ChEBI" id="CHEBI:132124"/>
        <dbReference type="EC" id="1.6.5.2"/>
    </reaction>
</comment>
<comment type="catalytic activity">
    <reaction evidence="1">
        <text>a quinone + NADPH + H(+) = a quinol + NADP(+)</text>
        <dbReference type="Rhea" id="RHEA:46164"/>
        <dbReference type="ChEBI" id="CHEBI:15378"/>
        <dbReference type="ChEBI" id="CHEBI:24646"/>
        <dbReference type="ChEBI" id="CHEBI:57783"/>
        <dbReference type="ChEBI" id="CHEBI:58349"/>
        <dbReference type="ChEBI" id="CHEBI:132124"/>
        <dbReference type="EC" id="1.6.5.2"/>
    </reaction>
</comment>
<comment type="cofactor">
    <cofactor evidence="1">
        <name>FMN</name>
        <dbReference type="ChEBI" id="CHEBI:58210"/>
    </cofactor>
    <text evidence="1">Binds 1 FMN per monomer.</text>
</comment>
<comment type="similarity">
    <text evidence="1">Belongs to the WrbA family.</text>
</comment>